<gene>
    <name type="primary">arfB</name>
    <name type="ordered locus">MT0923</name>
</gene>
<proteinExistence type="inferred from homology"/>
<accession>P9WJG6</accession>
<accession>L0T7U8</accession>
<accession>P64755</accession>
<accession>Q10558</accession>
<organism>
    <name type="scientific">Mycobacterium tuberculosis (strain CDC 1551 / Oshkosh)</name>
    <dbReference type="NCBI Taxonomy" id="83331"/>
    <lineage>
        <taxon>Bacteria</taxon>
        <taxon>Bacillati</taxon>
        <taxon>Actinomycetota</taxon>
        <taxon>Actinomycetes</taxon>
        <taxon>Mycobacteriales</taxon>
        <taxon>Mycobacteriaceae</taxon>
        <taxon>Mycobacterium</taxon>
        <taxon>Mycobacterium tuberculosis complex</taxon>
    </lineage>
</organism>
<protein>
    <recommendedName>
        <fullName>Uncharacterized membrane protein ArfB</fullName>
    </recommendedName>
</protein>
<sequence length="50" mass="5245">MDFVIQWSCYLLAFLGGSAVAWVVVTLSIKRASRDEGAAEAPSAAETGAQ</sequence>
<keyword id="KW-1003">Cell membrane</keyword>
<keyword id="KW-0472">Membrane</keyword>
<keyword id="KW-1185">Reference proteome</keyword>
<keyword id="KW-0812">Transmembrane</keyword>
<keyword id="KW-1133">Transmembrane helix</keyword>
<name>ARFB_MYCTO</name>
<comment type="function">
    <text evidence="1">Required for wild-type expression of ArfA and ammonia secretion, not however part of an ammonia transporter.</text>
</comment>
<comment type="subcellular location">
    <subcellularLocation>
        <location evidence="3">Cell membrane</location>
        <topology evidence="3">Single-pass membrane protein</topology>
    </subcellularLocation>
</comment>
<comment type="similarity">
    <text evidence="3">Belongs to the ArfB membrane protein family.</text>
</comment>
<reference key="1">
    <citation type="journal article" date="2002" name="J. Bacteriol.">
        <title>Whole-genome comparison of Mycobacterium tuberculosis clinical and laboratory strains.</title>
        <authorList>
            <person name="Fleischmann R.D."/>
            <person name="Alland D."/>
            <person name="Eisen J.A."/>
            <person name="Carpenter L."/>
            <person name="White O."/>
            <person name="Peterson J.D."/>
            <person name="DeBoy R.T."/>
            <person name="Dodson R.J."/>
            <person name="Gwinn M.L."/>
            <person name="Haft D.H."/>
            <person name="Hickey E.K."/>
            <person name="Kolonay J.F."/>
            <person name="Nelson W.C."/>
            <person name="Umayam L.A."/>
            <person name="Ermolaeva M.D."/>
            <person name="Salzberg S.L."/>
            <person name="Delcher A."/>
            <person name="Utterback T.R."/>
            <person name="Weidman J.F."/>
            <person name="Khouri H.M."/>
            <person name="Gill J."/>
            <person name="Mikula A."/>
            <person name="Bishai W."/>
            <person name="Jacobs W.R. Jr."/>
            <person name="Venter J.C."/>
            <person name="Fraser C.M."/>
        </authorList>
    </citation>
    <scope>NUCLEOTIDE SEQUENCE [LARGE SCALE GENOMIC DNA]</scope>
    <source>
        <strain>CDC 1551 / Oshkosh</strain>
    </source>
</reference>
<dbReference type="EMBL" id="AE000516">
    <property type="protein sequence ID" value="AAK45170.1"/>
    <property type="molecule type" value="Genomic_DNA"/>
</dbReference>
<dbReference type="PIR" id="A70783">
    <property type="entry name" value="A70783"/>
</dbReference>
<dbReference type="RefSeq" id="WP_003404687.1">
    <property type="nucleotide sequence ID" value="NZ_KK341227.1"/>
</dbReference>
<dbReference type="SMR" id="P9WJG6"/>
<dbReference type="KEGG" id="mtc:MT0923"/>
<dbReference type="PATRIC" id="fig|83331.31.peg.992"/>
<dbReference type="HOGENOM" id="CLU_214389_0_0_11"/>
<dbReference type="Proteomes" id="UP000001020">
    <property type="component" value="Chromosome"/>
</dbReference>
<dbReference type="GO" id="GO:0005886">
    <property type="term" value="C:plasma membrane"/>
    <property type="evidence" value="ECO:0007669"/>
    <property type="project" value="UniProtKB-SubCell"/>
</dbReference>
<feature type="chain" id="PRO_0000427833" description="Uncharacterized membrane protein ArfB">
    <location>
        <begin position="1"/>
        <end position="50"/>
    </location>
</feature>
<feature type="transmembrane region" description="Helical" evidence="2">
    <location>
        <begin position="9"/>
        <end position="29"/>
    </location>
</feature>
<evidence type="ECO:0000250" key="1"/>
<evidence type="ECO:0000255" key="2"/>
<evidence type="ECO:0000305" key="3"/>